<dbReference type="EMBL" id="AE017282">
    <property type="protein sequence ID" value="AAU93290.1"/>
    <property type="molecule type" value="Genomic_DNA"/>
</dbReference>
<dbReference type="RefSeq" id="WP_010959869.1">
    <property type="nucleotide sequence ID" value="NC_002977.6"/>
</dbReference>
<dbReference type="STRING" id="243233.MCA0521"/>
<dbReference type="GeneID" id="88222851"/>
<dbReference type="KEGG" id="mca:MCA0521"/>
<dbReference type="eggNOG" id="COG2983">
    <property type="taxonomic scope" value="Bacteria"/>
</dbReference>
<dbReference type="HOGENOM" id="CLU_109769_1_0_6"/>
<dbReference type="Proteomes" id="UP000006821">
    <property type="component" value="Chromosome"/>
</dbReference>
<dbReference type="HAMAP" id="MF_00676">
    <property type="entry name" value="UPF0260"/>
    <property type="match status" value="1"/>
</dbReference>
<dbReference type="InterPro" id="IPR005358">
    <property type="entry name" value="Puta_zinc/iron-chelating_dom"/>
</dbReference>
<dbReference type="InterPro" id="IPR008228">
    <property type="entry name" value="UCP006173"/>
</dbReference>
<dbReference type="NCBIfam" id="NF003501">
    <property type="entry name" value="PRK05170.1-5"/>
    <property type="match status" value="1"/>
</dbReference>
<dbReference type="NCBIfam" id="NF003507">
    <property type="entry name" value="PRK05170.2-5"/>
    <property type="match status" value="1"/>
</dbReference>
<dbReference type="PANTHER" id="PTHR37421">
    <property type="entry name" value="UPF0260 PROTEIN YCGN"/>
    <property type="match status" value="1"/>
</dbReference>
<dbReference type="PANTHER" id="PTHR37421:SF1">
    <property type="entry name" value="UPF0260 PROTEIN YCGN"/>
    <property type="match status" value="1"/>
</dbReference>
<dbReference type="Pfam" id="PF03692">
    <property type="entry name" value="CxxCxxCC"/>
    <property type="match status" value="1"/>
</dbReference>
<dbReference type="PIRSF" id="PIRSF006173">
    <property type="entry name" value="UCP006173"/>
    <property type="match status" value="1"/>
</dbReference>
<reference key="1">
    <citation type="journal article" date="2004" name="PLoS Biol.">
        <title>Genomic insights into methanotrophy: the complete genome sequence of Methylococcus capsulatus (Bath).</title>
        <authorList>
            <person name="Ward N.L."/>
            <person name="Larsen O."/>
            <person name="Sakwa J."/>
            <person name="Bruseth L."/>
            <person name="Khouri H.M."/>
            <person name="Durkin A.S."/>
            <person name="Dimitrov G."/>
            <person name="Jiang L."/>
            <person name="Scanlan D."/>
            <person name="Kang K.H."/>
            <person name="Lewis M.R."/>
            <person name="Nelson K.E."/>
            <person name="Methe B.A."/>
            <person name="Wu M."/>
            <person name="Heidelberg J.F."/>
            <person name="Paulsen I.T."/>
            <person name="Fouts D.E."/>
            <person name="Ravel J."/>
            <person name="Tettelin H."/>
            <person name="Ren Q."/>
            <person name="Read T.D."/>
            <person name="DeBoy R.T."/>
            <person name="Seshadri R."/>
            <person name="Salzberg S.L."/>
            <person name="Jensen H.B."/>
            <person name="Birkeland N.K."/>
            <person name="Nelson W.C."/>
            <person name="Dodson R.J."/>
            <person name="Grindhaug S.H."/>
            <person name="Holt I.E."/>
            <person name="Eidhammer I."/>
            <person name="Jonasen I."/>
            <person name="Vanaken S."/>
            <person name="Utterback T.R."/>
            <person name="Feldblyum T.V."/>
            <person name="Fraser C.M."/>
            <person name="Lillehaug J.R."/>
            <person name="Eisen J.A."/>
        </authorList>
    </citation>
    <scope>NUCLEOTIDE SEQUENCE [LARGE SCALE GENOMIC DNA]</scope>
    <source>
        <strain>ATCC 33009 / NCIMB 11132 / Bath</strain>
    </source>
</reference>
<proteinExistence type="inferred from homology"/>
<protein>
    <recommendedName>
        <fullName evidence="1">UPF0260 protein MCA0521</fullName>
    </recommendedName>
</protein>
<comment type="similarity">
    <text evidence="1">Belongs to the UPF0260 family.</text>
</comment>
<name>Y521_METCA</name>
<feature type="chain" id="PRO_1000131623" description="UPF0260 protein MCA0521">
    <location>
        <begin position="1"/>
        <end position="147"/>
    </location>
</feature>
<evidence type="ECO:0000255" key="1">
    <source>
        <dbReference type="HAMAP-Rule" id="MF_00676"/>
    </source>
</evidence>
<keyword id="KW-1185">Reference proteome</keyword>
<accession>Q60BF6</accession>
<sequence>MADAPFWHAKALAELSLAEWESLCDGCGKCCLHKLEDEDTGEILYTRVACRLLDIAACRCTAYQDRFRLVPDCMDLRQVPDQFHWLPASCAYRLLSEGRPLPAWHPLVSGAADSVHRAGKSVCRLAVSETVVDCIEDHVIEGLGDAV</sequence>
<organism>
    <name type="scientific">Methylococcus capsulatus (strain ATCC 33009 / NCIMB 11132 / Bath)</name>
    <dbReference type="NCBI Taxonomy" id="243233"/>
    <lineage>
        <taxon>Bacteria</taxon>
        <taxon>Pseudomonadati</taxon>
        <taxon>Pseudomonadota</taxon>
        <taxon>Gammaproteobacteria</taxon>
        <taxon>Methylococcales</taxon>
        <taxon>Methylococcaceae</taxon>
        <taxon>Methylococcus</taxon>
    </lineage>
</organism>
<gene>
    <name type="ordered locus">MCA0521</name>
</gene>